<feature type="chain" id="PRO_0000335241" description="DNA mismatch repair protein MutS">
    <location>
        <begin position="1"/>
        <end position="871"/>
    </location>
</feature>
<feature type="region of interest" description="Disordered" evidence="2">
    <location>
        <begin position="830"/>
        <end position="849"/>
    </location>
</feature>
<feature type="binding site" evidence="1">
    <location>
        <begin position="630"/>
        <end position="637"/>
    </location>
    <ligand>
        <name>ATP</name>
        <dbReference type="ChEBI" id="CHEBI:30616"/>
    </ligand>
</feature>
<dbReference type="EMBL" id="CP000542">
    <property type="protein sequence ID" value="ABM60250.1"/>
    <property type="molecule type" value="Genomic_DNA"/>
</dbReference>
<dbReference type="RefSeq" id="WP_011812234.1">
    <property type="nucleotide sequence ID" value="NC_008786.1"/>
</dbReference>
<dbReference type="SMR" id="A1WRJ3"/>
<dbReference type="STRING" id="391735.Veis_4552"/>
<dbReference type="GeneID" id="76462846"/>
<dbReference type="KEGG" id="vei:Veis_4552"/>
<dbReference type="eggNOG" id="COG0249">
    <property type="taxonomic scope" value="Bacteria"/>
</dbReference>
<dbReference type="HOGENOM" id="CLU_002472_4_0_4"/>
<dbReference type="OrthoDB" id="9802448at2"/>
<dbReference type="Proteomes" id="UP000000374">
    <property type="component" value="Chromosome"/>
</dbReference>
<dbReference type="GO" id="GO:0005829">
    <property type="term" value="C:cytosol"/>
    <property type="evidence" value="ECO:0007669"/>
    <property type="project" value="TreeGrafter"/>
</dbReference>
<dbReference type="GO" id="GO:0005524">
    <property type="term" value="F:ATP binding"/>
    <property type="evidence" value="ECO:0007669"/>
    <property type="project" value="UniProtKB-UniRule"/>
</dbReference>
<dbReference type="GO" id="GO:0140664">
    <property type="term" value="F:ATP-dependent DNA damage sensor activity"/>
    <property type="evidence" value="ECO:0007669"/>
    <property type="project" value="InterPro"/>
</dbReference>
<dbReference type="GO" id="GO:0003684">
    <property type="term" value="F:damaged DNA binding"/>
    <property type="evidence" value="ECO:0007669"/>
    <property type="project" value="UniProtKB-UniRule"/>
</dbReference>
<dbReference type="GO" id="GO:0030983">
    <property type="term" value="F:mismatched DNA binding"/>
    <property type="evidence" value="ECO:0007669"/>
    <property type="project" value="InterPro"/>
</dbReference>
<dbReference type="GO" id="GO:0006298">
    <property type="term" value="P:mismatch repair"/>
    <property type="evidence" value="ECO:0007669"/>
    <property type="project" value="UniProtKB-UniRule"/>
</dbReference>
<dbReference type="FunFam" id="3.40.1170.10:FF:000001">
    <property type="entry name" value="DNA mismatch repair protein MutS"/>
    <property type="match status" value="1"/>
</dbReference>
<dbReference type="Gene3D" id="1.10.1420.10">
    <property type="match status" value="2"/>
</dbReference>
<dbReference type="Gene3D" id="6.10.140.430">
    <property type="match status" value="1"/>
</dbReference>
<dbReference type="Gene3D" id="3.40.1170.10">
    <property type="entry name" value="DNA repair protein MutS, domain I"/>
    <property type="match status" value="1"/>
</dbReference>
<dbReference type="Gene3D" id="3.30.420.110">
    <property type="entry name" value="MutS, connector domain"/>
    <property type="match status" value="1"/>
</dbReference>
<dbReference type="Gene3D" id="3.40.50.300">
    <property type="entry name" value="P-loop containing nucleotide triphosphate hydrolases"/>
    <property type="match status" value="1"/>
</dbReference>
<dbReference type="HAMAP" id="MF_00096">
    <property type="entry name" value="MutS"/>
    <property type="match status" value="1"/>
</dbReference>
<dbReference type="InterPro" id="IPR005748">
    <property type="entry name" value="DNA_mismatch_repair_MutS"/>
</dbReference>
<dbReference type="InterPro" id="IPR007695">
    <property type="entry name" value="DNA_mismatch_repair_MutS-lik_N"/>
</dbReference>
<dbReference type="InterPro" id="IPR017261">
    <property type="entry name" value="DNA_mismatch_repair_MutS/MSH"/>
</dbReference>
<dbReference type="InterPro" id="IPR000432">
    <property type="entry name" value="DNA_mismatch_repair_MutS_C"/>
</dbReference>
<dbReference type="InterPro" id="IPR007861">
    <property type="entry name" value="DNA_mismatch_repair_MutS_clamp"/>
</dbReference>
<dbReference type="InterPro" id="IPR007696">
    <property type="entry name" value="DNA_mismatch_repair_MutS_core"/>
</dbReference>
<dbReference type="InterPro" id="IPR016151">
    <property type="entry name" value="DNA_mismatch_repair_MutS_N"/>
</dbReference>
<dbReference type="InterPro" id="IPR036187">
    <property type="entry name" value="DNA_mismatch_repair_MutS_sf"/>
</dbReference>
<dbReference type="InterPro" id="IPR007860">
    <property type="entry name" value="DNA_mmatch_repair_MutS_con_dom"/>
</dbReference>
<dbReference type="InterPro" id="IPR045076">
    <property type="entry name" value="MutS"/>
</dbReference>
<dbReference type="InterPro" id="IPR036678">
    <property type="entry name" value="MutS_con_dom_sf"/>
</dbReference>
<dbReference type="InterPro" id="IPR027417">
    <property type="entry name" value="P-loop_NTPase"/>
</dbReference>
<dbReference type="NCBIfam" id="TIGR01070">
    <property type="entry name" value="mutS1"/>
    <property type="match status" value="1"/>
</dbReference>
<dbReference type="NCBIfam" id="NF003810">
    <property type="entry name" value="PRK05399.1"/>
    <property type="match status" value="1"/>
</dbReference>
<dbReference type="PANTHER" id="PTHR11361:SF34">
    <property type="entry name" value="DNA MISMATCH REPAIR PROTEIN MSH1, MITOCHONDRIAL"/>
    <property type="match status" value="1"/>
</dbReference>
<dbReference type="PANTHER" id="PTHR11361">
    <property type="entry name" value="DNA MISMATCH REPAIR PROTEIN MUTS FAMILY MEMBER"/>
    <property type="match status" value="1"/>
</dbReference>
<dbReference type="Pfam" id="PF01624">
    <property type="entry name" value="MutS_I"/>
    <property type="match status" value="1"/>
</dbReference>
<dbReference type="Pfam" id="PF05188">
    <property type="entry name" value="MutS_II"/>
    <property type="match status" value="1"/>
</dbReference>
<dbReference type="Pfam" id="PF05192">
    <property type="entry name" value="MutS_III"/>
    <property type="match status" value="1"/>
</dbReference>
<dbReference type="Pfam" id="PF05190">
    <property type="entry name" value="MutS_IV"/>
    <property type="match status" value="1"/>
</dbReference>
<dbReference type="Pfam" id="PF00488">
    <property type="entry name" value="MutS_V"/>
    <property type="match status" value="1"/>
</dbReference>
<dbReference type="PIRSF" id="PIRSF037677">
    <property type="entry name" value="DNA_mis_repair_Msh6"/>
    <property type="match status" value="1"/>
</dbReference>
<dbReference type="SMART" id="SM00534">
    <property type="entry name" value="MUTSac"/>
    <property type="match status" value="1"/>
</dbReference>
<dbReference type="SMART" id="SM00533">
    <property type="entry name" value="MUTSd"/>
    <property type="match status" value="1"/>
</dbReference>
<dbReference type="SUPFAM" id="SSF55271">
    <property type="entry name" value="DNA repair protein MutS, domain I"/>
    <property type="match status" value="1"/>
</dbReference>
<dbReference type="SUPFAM" id="SSF53150">
    <property type="entry name" value="DNA repair protein MutS, domain II"/>
    <property type="match status" value="1"/>
</dbReference>
<dbReference type="SUPFAM" id="SSF48334">
    <property type="entry name" value="DNA repair protein MutS, domain III"/>
    <property type="match status" value="1"/>
</dbReference>
<dbReference type="SUPFAM" id="SSF52540">
    <property type="entry name" value="P-loop containing nucleoside triphosphate hydrolases"/>
    <property type="match status" value="1"/>
</dbReference>
<dbReference type="PROSITE" id="PS00486">
    <property type="entry name" value="DNA_MISMATCH_REPAIR_2"/>
    <property type="match status" value="1"/>
</dbReference>
<gene>
    <name evidence="1" type="primary">mutS</name>
    <name type="ordered locus">Veis_4552</name>
</gene>
<name>MUTS_VEREI</name>
<keyword id="KW-0067">ATP-binding</keyword>
<keyword id="KW-0227">DNA damage</keyword>
<keyword id="KW-0234">DNA repair</keyword>
<keyword id="KW-0238">DNA-binding</keyword>
<keyword id="KW-0547">Nucleotide-binding</keyword>
<keyword id="KW-1185">Reference proteome</keyword>
<comment type="function">
    <text evidence="1">This protein is involved in the repair of mismatches in DNA. It is possible that it carries out the mismatch recognition step. This protein has a weak ATPase activity.</text>
</comment>
<comment type="similarity">
    <text evidence="1">Belongs to the DNA mismatch repair MutS family.</text>
</comment>
<proteinExistence type="inferred from homology"/>
<accession>A1WRJ3</accession>
<organism>
    <name type="scientific">Verminephrobacter eiseniae (strain EF01-2)</name>
    <dbReference type="NCBI Taxonomy" id="391735"/>
    <lineage>
        <taxon>Bacteria</taxon>
        <taxon>Pseudomonadati</taxon>
        <taxon>Pseudomonadota</taxon>
        <taxon>Betaproteobacteria</taxon>
        <taxon>Burkholderiales</taxon>
        <taxon>Comamonadaceae</taxon>
        <taxon>Verminephrobacter</taxon>
    </lineage>
</organism>
<protein>
    <recommendedName>
        <fullName evidence="1">DNA mismatch repair protein MutS</fullName>
    </recommendedName>
</protein>
<evidence type="ECO:0000255" key="1">
    <source>
        <dbReference type="HAMAP-Rule" id="MF_00096"/>
    </source>
</evidence>
<evidence type="ECO:0000256" key="2">
    <source>
        <dbReference type="SAM" id="MobiDB-lite"/>
    </source>
</evidence>
<sequence length="871" mass="94974">MSAPLEHHTPMMAQYLALKGGYPETLLFYRMGDFYELFYADAEKAARLLNITLTQRGQSGGQTVVMAGVPFHALENYLTRLIKLGESVAIAEQVGEVGAAKGPLERKVVRVITPGTLTDTELLSDKAESLLLSLHQAARARCGLAWLSVTQGRVHLAECAHDELGAWLARVAPSEIIYSAGVTQRFEQQLQALRQSGAFDCPMRTRPDWQFDQALGERKLLEHLGAASLQAWDAQDLGAAQAAAAGLLAYAEHTQGRALTHVHSVQAQRGDELIDLPGSTRRNLELVKTLRGDDAPTLLSLLDNCMTGMGSRLLKTWLLEPHRERHQARQRLSASTALRGAAAGAGPWATLREQIKGASDVERITARIALRQVRPRELPGLVKTLQKAQLLAQHGQIPEPYLMQIFDQLHPPEGCAELLQAAIAEEPAALVREGGVIATGFDAELDELRALQTDCDGFLLDLETREKARTGIANLRVQFNKVHGFYIEVTSSNLERVPADYRRRQTLKNAERFITPELKAFEDKALSANERALVREKWLYEQILDRLQPHVPALTRLAQALATLDVLCTLAERSLTLNWCAPQFVSEPCIEIEGGRHPVVEARLAETASGSFIANHTRLNANTRMQLITGPNMGGKSTYMRQVALIVLLASIGSHVPASSCRLGPIDAIHTRIGAADDLANAQSTFMLEMTEAAHILHAATAHSLVLMDEIGRGTSTFDGLALASGIATHLHDKTRAFTLFATHYFELTDLPAKARHAINMHVSATESGADIVFLHEIQPGPASRSYGIQVAKLAGMPPPVLHHARRTLAALEERAGAGQLQVDLFAAPKEEPESKSASPVEAALAGINPDALSPREALDALYQLKRMAGK</sequence>
<reference key="1">
    <citation type="submission" date="2006-12" db="EMBL/GenBank/DDBJ databases">
        <title>Complete sequence of chromosome 1 of Verminephrobacter eiseniae EF01-2.</title>
        <authorList>
            <person name="Copeland A."/>
            <person name="Lucas S."/>
            <person name="Lapidus A."/>
            <person name="Barry K."/>
            <person name="Detter J.C."/>
            <person name="Glavina del Rio T."/>
            <person name="Dalin E."/>
            <person name="Tice H."/>
            <person name="Pitluck S."/>
            <person name="Chertkov O."/>
            <person name="Brettin T."/>
            <person name="Bruce D."/>
            <person name="Han C."/>
            <person name="Tapia R."/>
            <person name="Gilna P."/>
            <person name="Schmutz J."/>
            <person name="Larimer F."/>
            <person name="Land M."/>
            <person name="Hauser L."/>
            <person name="Kyrpides N."/>
            <person name="Kim E."/>
            <person name="Stahl D."/>
            <person name="Richardson P."/>
        </authorList>
    </citation>
    <scope>NUCLEOTIDE SEQUENCE [LARGE SCALE GENOMIC DNA]</scope>
    <source>
        <strain>EF01-2</strain>
    </source>
</reference>